<keyword id="KW-0238">DNA-binding</keyword>
<keyword id="KW-0371">Homeobox</keyword>
<keyword id="KW-0539">Nucleus</keyword>
<keyword id="KW-1185">Reference proteome</keyword>
<protein>
    <recommendedName>
        <fullName>Homeobox protein knotted-1-like 1</fullName>
    </recommendedName>
    <alternativeName>
        <fullName>Protein BREVIPEDICELLUS</fullName>
    </alternativeName>
    <alternativeName>
        <fullName>Protein KNAT1</fullName>
    </alternativeName>
</protein>
<evidence type="ECO:0000255" key="1">
    <source>
        <dbReference type="PROSITE-ProRule" id="PRU00108"/>
    </source>
</evidence>
<evidence type="ECO:0000255" key="2">
    <source>
        <dbReference type="PROSITE-ProRule" id="PRU00559"/>
    </source>
</evidence>
<evidence type="ECO:0000256" key="3">
    <source>
        <dbReference type="SAM" id="MobiDB-lite"/>
    </source>
</evidence>
<evidence type="ECO:0000269" key="4">
    <source>
    </source>
</evidence>
<evidence type="ECO:0000269" key="5">
    <source>
    </source>
</evidence>
<evidence type="ECO:0000269" key="6">
    <source>
    </source>
</evidence>
<evidence type="ECO:0000269" key="7">
    <source>
    </source>
</evidence>
<evidence type="ECO:0000269" key="8">
    <source>
    </source>
</evidence>
<evidence type="ECO:0000269" key="9">
    <source>
    </source>
</evidence>
<evidence type="ECO:0000269" key="10">
    <source>
    </source>
</evidence>
<evidence type="ECO:0000269" key="11">
    <source>
    </source>
</evidence>
<evidence type="ECO:0000269" key="12">
    <source>
    </source>
</evidence>
<evidence type="ECO:0000269" key="13">
    <source>
    </source>
</evidence>
<evidence type="ECO:0000269" key="14">
    <source>
    </source>
</evidence>
<evidence type="ECO:0000269" key="15">
    <source>
    </source>
</evidence>
<evidence type="ECO:0000305" key="16"/>
<reference key="1">
    <citation type="journal article" date="1994" name="Plant Cell">
        <title>A knotted1-like homeobox gene in Arabidopsis is expressed in the vegetative meristem and dramatically alters leaf morphology when overexpressed in transgenic plants.</title>
        <authorList>
            <person name="Lincoln C."/>
            <person name="Long J."/>
            <person name="Yamaguchi J."/>
            <person name="Serikawa K.A."/>
            <person name="Hake S."/>
        </authorList>
    </citation>
    <scope>NUCLEOTIDE SEQUENCE [GENOMIC DNA]</scope>
    <scope>TISSUE SPECIFICITY</scope>
    <scope>FUNCTION</scope>
    <source>
        <strain>cv. Columbia</strain>
    </source>
</reference>
<reference key="2">
    <citation type="journal article" date="2002" name="Proc. Natl. Acad. Sci. U.S.A.">
        <title>The homeobox gene BREVIPEDICELLUS is a key regulator of inflorescence architecture in Arabidopsis.</title>
        <authorList>
            <person name="Venglat S.P."/>
            <person name="Dumonceaux T."/>
            <person name="Rozwadowski K."/>
            <person name="Parnell L."/>
            <person name="Babic V."/>
            <person name="Keller W."/>
            <person name="Martienssen R."/>
            <person name="Selvaraj G."/>
            <person name="Datla R."/>
        </authorList>
    </citation>
    <scope>NUCLEOTIDE SEQUENCE [MRNA]</scope>
    <source>
        <strain>cv. Landsberg erecta</strain>
        <strain>cv. RLD</strain>
    </source>
</reference>
<reference key="3">
    <citation type="journal article" date="1999" name="Nature">
        <title>Sequence and analysis of chromosome 4 of the plant Arabidopsis thaliana.</title>
        <authorList>
            <person name="Mayer K.F.X."/>
            <person name="Schueller C."/>
            <person name="Wambutt R."/>
            <person name="Murphy G."/>
            <person name="Volckaert G."/>
            <person name="Pohl T."/>
            <person name="Duesterhoeft A."/>
            <person name="Stiekema W."/>
            <person name="Entian K.-D."/>
            <person name="Terryn N."/>
            <person name="Harris B."/>
            <person name="Ansorge W."/>
            <person name="Brandt P."/>
            <person name="Grivell L.A."/>
            <person name="Rieger M."/>
            <person name="Weichselgartner M."/>
            <person name="de Simone V."/>
            <person name="Obermaier B."/>
            <person name="Mache R."/>
            <person name="Mueller M."/>
            <person name="Kreis M."/>
            <person name="Delseny M."/>
            <person name="Puigdomenech P."/>
            <person name="Watson M."/>
            <person name="Schmidtheini T."/>
            <person name="Reichert B."/>
            <person name="Portetelle D."/>
            <person name="Perez-Alonso M."/>
            <person name="Boutry M."/>
            <person name="Bancroft I."/>
            <person name="Vos P."/>
            <person name="Hoheisel J."/>
            <person name="Zimmermann W."/>
            <person name="Wedler H."/>
            <person name="Ridley P."/>
            <person name="Langham S.-A."/>
            <person name="McCullagh B."/>
            <person name="Bilham L."/>
            <person name="Robben J."/>
            <person name="van der Schueren J."/>
            <person name="Grymonprez B."/>
            <person name="Chuang Y.-J."/>
            <person name="Vandenbussche F."/>
            <person name="Braeken M."/>
            <person name="Weltjens I."/>
            <person name="Voet M."/>
            <person name="Bastiaens I."/>
            <person name="Aert R."/>
            <person name="Defoor E."/>
            <person name="Weitzenegger T."/>
            <person name="Bothe G."/>
            <person name="Ramsperger U."/>
            <person name="Hilbert H."/>
            <person name="Braun M."/>
            <person name="Holzer E."/>
            <person name="Brandt A."/>
            <person name="Peters S."/>
            <person name="van Staveren M."/>
            <person name="Dirkse W."/>
            <person name="Mooijman P."/>
            <person name="Klein Lankhorst R."/>
            <person name="Rose M."/>
            <person name="Hauf J."/>
            <person name="Koetter P."/>
            <person name="Berneiser S."/>
            <person name="Hempel S."/>
            <person name="Feldpausch M."/>
            <person name="Lamberth S."/>
            <person name="Van den Daele H."/>
            <person name="De Keyser A."/>
            <person name="Buysshaert C."/>
            <person name="Gielen J."/>
            <person name="Villarroel R."/>
            <person name="De Clercq R."/>
            <person name="van Montagu M."/>
            <person name="Rogers J."/>
            <person name="Cronin A."/>
            <person name="Quail M.A."/>
            <person name="Bray-Allen S."/>
            <person name="Clark L."/>
            <person name="Doggett J."/>
            <person name="Hall S."/>
            <person name="Kay M."/>
            <person name="Lennard N."/>
            <person name="McLay K."/>
            <person name="Mayes R."/>
            <person name="Pettett A."/>
            <person name="Rajandream M.A."/>
            <person name="Lyne M."/>
            <person name="Benes V."/>
            <person name="Rechmann S."/>
            <person name="Borkova D."/>
            <person name="Bloecker H."/>
            <person name="Scharfe M."/>
            <person name="Grimm M."/>
            <person name="Loehnert T.-H."/>
            <person name="Dose S."/>
            <person name="de Haan M."/>
            <person name="Maarse A.C."/>
            <person name="Schaefer M."/>
            <person name="Mueller-Auer S."/>
            <person name="Gabel C."/>
            <person name="Fuchs M."/>
            <person name="Fartmann B."/>
            <person name="Granderath K."/>
            <person name="Dauner D."/>
            <person name="Herzl A."/>
            <person name="Neumann S."/>
            <person name="Argiriou A."/>
            <person name="Vitale D."/>
            <person name="Liguori R."/>
            <person name="Piravandi E."/>
            <person name="Massenet O."/>
            <person name="Quigley F."/>
            <person name="Clabauld G."/>
            <person name="Muendlein A."/>
            <person name="Felber R."/>
            <person name="Schnabl S."/>
            <person name="Hiller R."/>
            <person name="Schmidt W."/>
            <person name="Lecharny A."/>
            <person name="Aubourg S."/>
            <person name="Chefdor F."/>
            <person name="Cooke R."/>
            <person name="Berger C."/>
            <person name="Monfort A."/>
            <person name="Casacuberta E."/>
            <person name="Gibbons T."/>
            <person name="Weber N."/>
            <person name="Vandenbol M."/>
            <person name="Bargues M."/>
            <person name="Terol J."/>
            <person name="Torres A."/>
            <person name="Perez-Perez A."/>
            <person name="Purnelle B."/>
            <person name="Bent E."/>
            <person name="Johnson S."/>
            <person name="Tacon D."/>
            <person name="Jesse T."/>
            <person name="Heijnen L."/>
            <person name="Schwarz S."/>
            <person name="Scholler P."/>
            <person name="Heber S."/>
            <person name="Francs P."/>
            <person name="Bielke C."/>
            <person name="Frishman D."/>
            <person name="Haase D."/>
            <person name="Lemcke K."/>
            <person name="Mewes H.-W."/>
            <person name="Stocker S."/>
            <person name="Zaccaria P."/>
            <person name="Bevan M."/>
            <person name="Wilson R.K."/>
            <person name="de la Bastide M."/>
            <person name="Habermann K."/>
            <person name="Parnell L."/>
            <person name="Dedhia N."/>
            <person name="Gnoj L."/>
            <person name="Schutz K."/>
            <person name="Huang E."/>
            <person name="Spiegel L."/>
            <person name="Sekhon M."/>
            <person name="Murray J."/>
            <person name="Sheet P."/>
            <person name="Cordes M."/>
            <person name="Abu-Threideh J."/>
            <person name="Stoneking T."/>
            <person name="Kalicki J."/>
            <person name="Graves T."/>
            <person name="Harmon G."/>
            <person name="Edwards J."/>
            <person name="Latreille P."/>
            <person name="Courtney L."/>
            <person name="Cloud J."/>
            <person name="Abbott A."/>
            <person name="Scott K."/>
            <person name="Johnson D."/>
            <person name="Minx P."/>
            <person name="Bentley D."/>
            <person name="Fulton B."/>
            <person name="Miller N."/>
            <person name="Greco T."/>
            <person name="Kemp K."/>
            <person name="Kramer J."/>
            <person name="Fulton L."/>
            <person name="Mardis E."/>
            <person name="Dante M."/>
            <person name="Pepin K."/>
            <person name="Hillier L.W."/>
            <person name="Nelson J."/>
            <person name="Spieth J."/>
            <person name="Ryan E."/>
            <person name="Andrews S."/>
            <person name="Geisel C."/>
            <person name="Layman D."/>
            <person name="Du H."/>
            <person name="Ali J."/>
            <person name="Berghoff A."/>
            <person name="Jones K."/>
            <person name="Drone K."/>
            <person name="Cotton M."/>
            <person name="Joshu C."/>
            <person name="Antonoiu B."/>
            <person name="Zidanic M."/>
            <person name="Strong C."/>
            <person name="Sun H."/>
            <person name="Lamar B."/>
            <person name="Yordan C."/>
            <person name="Ma P."/>
            <person name="Zhong J."/>
            <person name="Preston R."/>
            <person name="Vil D."/>
            <person name="Shekher M."/>
            <person name="Matero A."/>
            <person name="Shah R."/>
            <person name="Swaby I.K."/>
            <person name="O'Shaughnessy A."/>
            <person name="Rodriguez M."/>
            <person name="Hoffman J."/>
            <person name="Till S."/>
            <person name="Granat S."/>
            <person name="Shohdy N."/>
            <person name="Hasegawa A."/>
            <person name="Hameed A."/>
            <person name="Lodhi M."/>
            <person name="Johnson A."/>
            <person name="Chen E."/>
            <person name="Marra M.A."/>
            <person name="Martienssen R."/>
            <person name="McCombie W.R."/>
        </authorList>
    </citation>
    <scope>NUCLEOTIDE SEQUENCE [LARGE SCALE GENOMIC DNA]</scope>
    <source>
        <strain>cv. Columbia</strain>
    </source>
</reference>
<reference key="4">
    <citation type="journal article" date="2017" name="Plant J.">
        <title>Araport11: a complete reannotation of the Arabidopsis thaliana reference genome.</title>
        <authorList>
            <person name="Cheng C.Y."/>
            <person name="Krishnakumar V."/>
            <person name="Chan A.P."/>
            <person name="Thibaud-Nissen F."/>
            <person name="Schobel S."/>
            <person name="Town C.D."/>
        </authorList>
    </citation>
    <scope>GENOME REANNOTATION</scope>
    <source>
        <strain>cv. Columbia</strain>
    </source>
</reference>
<reference key="5">
    <citation type="journal article" date="2003" name="Science">
        <title>Empirical analysis of transcriptional activity in the Arabidopsis genome.</title>
        <authorList>
            <person name="Yamada K."/>
            <person name="Lim J."/>
            <person name="Dale J.M."/>
            <person name="Chen H."/>
            <person name="Shinn P."/>
            <person name="Palm C.J."/>
            <person name="Southwick A.M."/>
            <person name="Wu H.C."/>
            <person name="Kim C.J."/>
            <person name="Nguyen M."/>
            <person name="Pham P.K."/>
            <person name="Cheuk R.F."/>
            <person name="Karlin-Newmann G."/>
            <person name="Liu S.X."/>
            <person name="Lam B."/>
            <person name="Sakano H."/>
            <person name="Wu T."/>
            <person name="Yu G."/>
            <person name="Miranda M."/>
            <person name="Quach H.L."/>
            <person name="Tripp M."/>
            <person name="Chang C.H."/>
            <person name="Lee J.M."/>
            <person name="Toriumi M.J."/>
            <person name="Chan M.M."/>
            <person name="Tang C.C."/>
            <person name="Onodera C.S."/>
            <person name="Deng J.M."/>
            <person name="Akiyama K."/>
            <person name="Ansari Y."/>
            <person name="Arakawa T."/>
            <person name="Banh J."/>
            <person name="Banno F."/>
            <person name="Bowser L."/>
            <person name="Brooks S.Y."/>
            <person name="Carninci P."/>
            <person name="Chao Q."/>
            <person name="Choy N."/>
            <person name="Enju A."/>
            <person name="Goldsmith A.D."/>
            <person name="Gurjal M."/>
            <person name="Hansen N.F."/>
            <person name="Hayashizaki Y."/>
            <person name="Johnson-Hopson C."/>
            <person name="Hsuan V.W."/>
            <person name="Iida K."/>
            <person name="Karnes M."/>
            <person name="Khan S."/>
            <person name="Koesema E."/>
            <person name="Ishida J."/>
            <person name="Jiang P.X."/>
            <person name="Jones T."/>
            <person name="Kawai J."/>
            <person name="Kamiya A."/>
            <person name="Meyers C."/>
            <person name="Nakajima M."/>
            <person name="Narusaka M."/>
            <person name="Seki M."/>
            <person name="Sakurai T."/>
            <person name="Satou M."/>
            <person name="Tamse R."/>
            <person name="Vaysberg M."/>
            <person name="Wallender E.K."/>
            <person name="Wong C."/>
            <person name="Yamamura Y."/>
            <person name="Yuan S."/>
            <person name="Shinozaki K."/>
            <person name="Davis R.W."/>
            <person name="Theologis A."/>
            <person name="Ecker J.R."/>
        </authorList>
    </citation>
    <scope>NUCLEOTIDE SEQUENCE [LARGE SCALE MRNA]</scope>
    <source>
        <strain>cv. Columbia</strain>
    </source>
</reference>
<reference key="6">
    <citation type="journal article" date="2001" name="Plant Cell">
        <title>The Arabidopsis BELL1 and KNOX TALE homeodomain proteins interact through a domain conserved between plants and animals.</title>
        <authorList>
            <person name="Bellaoui M."/>
            <person name="Pidkowich M.S."/>
            <person name="Samach A."/>
            <person name="Kushalappa K."/>
            <person name="Kohalmi S.E."/>
            <person name="Modrusan Z."/>
            <person name="Crosby W.L."/>
            <person name="Haughn G.W."/>
        </authorList>
    </citation>
    <scope>INTERACTION WITH BEL1</scope>
</reference>
<reference key="7">
    <citation type="journal article" date="2002" name="Development">
        <title>ASYMMETRIC LEAVES1 reveals knox gene redundancy in Arabidopsis.</title>
        <authorList>
            <person name="Byrne M.E."/>
            <person name="Simorowski J."/>
            <person name="Martienssen R.A."/>
        </authorList>
    </citation>
    <scope>FUNCTION</scope>
    <scope>REGULATION</scope>
</reference>
<reference key="8">
    <citation type="journal article" date="2003" name="Development">
        <title>Developmental regulation and significance of KNOX protein trafficking in Arabidopsis.</title>
        <authorList>
            <person name="Kim J.Y."/>
            <person name="Yuan Z."/>
            <person name="Jackson D."/>
        </authorList>
    </citation>
    <scope>FUNCTION</scope>
    <scope>TISSUE SPECIFICITY</scope>
</reference>
<reference key="9">
    <citation type="journal article" date="2003" name="Plant Cell">
        <title>The interaction of two homeobox genes, BREVIPEDICELLUS and PENNYWISE, regulates internode patterning in the Arabidopsis inflorescence.</title>
        <authorList>
            <person name="Smith H.M.S."/>
            <person name="Hake S."/>
        </authorList>
    </citation>
    <scope>INTERACTION WITH BLH9/PNY</scope>
</reference>
<reference key="10">
    <citation type="journal article" date="2005" name="Proc. Natl. Acad. Sci. U.S.A.">
        <title>A central role of Arabidopsis thaliana ovate family proteins in networking and subcellular localization of 3-aa loop extension homeodomain proteins.</title>
        <authorList>
            <person name="Hackbusch J."/>
            <person name="Richter K."/>
            <person name="Muller J."/>
            <person name="Salamini F."/>
            <person name="Uhrig J.F."/>
        </authorList>
    </citation>
    <scope>INTERACTION WITH OFP1; OFP2; OFP4; OFP6 AND OFP12</scope>
</reference>
<reference key="11">
    <citation type="journal article" date="2006" name="Planta">
        <title>Arabidopsis inflorescence architecture requires the activities of KNOX-BELL homeodomain heterodimers.</title>
        <authorList>
            <person name="Kanrar S."/>
            <person name="Onguka O."/>
            <person name="Smith H.M.S."/>
        </authorList>
    </citation>
    <scope>INTERACTION WITH BLH8/PNF AND BLH9/PNY</scope>
</reference>
<reference key="12">
    <citation type="journal article" date="2007" name="Plant Cell">
        <title>The Arabidopsis BEL1-LIKE HOMEODOMAIN proteins SAW1 and SAW2 act redundantly to regulate KNOX expression spatially in leaf margins.</title>
        <authorList>
            <person name="Kumar R."/>
            <person name="Kushalappa K."/>
            <person name="Godt D."/>
            <person name="Pidkowich M.S."/>
            <person name="Pastorelli S."/>
            <person name="Hepworth S.R."/>
            <person name="Haughn G.W."/>
        </authorList>
    </citation>
    <scope>INTERACTION WITH BEL1 AND BLH2</scope>
</reference>
<reference key="13">
    <citation type="journal article" date="2008" name="Plant Cell">
        <title>KNOX lost the OX: the Arabidopsis KNATM gene defines a novel class of KNOX transcriptional regulators missing the homeodomain.</title>
        <authorList>
            <person name="Magnani E."/>
            <person name="Hake S."/>
        </authorList>
    </citation>
    <scope>INTERACTION WITH KNATM</scope>
</reference>
<reference key="14">
    <citation type="journal article" date="2011" name="Science">
        <title>Chaperonins facilitate KNOTTED1 cell-to-cell trafficking and stem cell function.</title>
        <authorList>
            <person name="Xu X.M."/>
            <person name="Wang J."/>
            <person name="Xuan Z."/>
            <person name="Goldshmidt A."/>
            <person name="Borrill P.G."/>
            <person name="Hariharan N."/>
            <person name="Kim J.Y."/>
            <person name="Jackson D."/>
        </authorList>
    </citation>
    <scope>INTERACTION WITH CCT7 AND CCT8</scope>
</reference>
<reference key="15">
    <citation type="journal article" date="2015" name="PLoS Genet.">
        <title>HANABA TARANU (HAN) bridges meristem and organ primordia boundaries through PINHEAD, JAGGED, BLADE-ON-PETIOLE2 and CYTOKININ OXIDASE 3 during flower development in Arabidopsis.</title>
        <authorList>
            <person name="Ding L."/>
            <person name="Yan S."/>
            <person name="Jiang L."/>
            <person name="Zhao W."/>
            <person name="Ning K."/>
            <person name="Zhao J."/>
            <person name="Liu X."/>
            <person name="Zhang J."/>
            <person name="Wang Q."/>
            <person name="Zhang X."/>
        </authorList>
    </citation>
    <scope>INTERACTION WITH AGO10/PNH</scope>
    <scope>TISSUE SPECIFICITY</scope>
</reference>
<reference key="16">
    <citation type="journal article" date="2016" name="Plant J.">
        <title>Altered expression of the bZIP transcription factor DRINK ME affects growth and reproductive development in Arabidopsis thaliana.</title>
        <authorList>
            <person name="Lozano-Sotomayor P."/>
            <person name="Chavez Montes R.A."/>
            <person name="Silvestre-Vano M."/>
            <person name="Herrera-Ubaldo H."/>
            <person name="Greco R."/>
            <person name="Pablo-Villa J."/>
            <person name="Galliani B.M."/>
            <person name="Diaz-Ramirez D."/>
            <person name="Weemen M."/>
            <person name="Boutilier K."/>
            <person name="Pereira A."/>
            <person name="Colombo L."/>
            <person name="Madueno F."/>
            <person name="Marsch-Martinez N."/>
            <person name="de Folter S."/>
        </authorList>
    </citation>
    <scope>INTERACTION WITH BZIP30</scope>
</reference>
<proteinExistence type="evidence at protein level"/>
<organism>
    <name type="scientific">Arabidopsis thaliana</name>
    <name type="common">Mouse-ear cress</name>
    <dbReference type="NCBI Taxonomy" id="3702"/>
    <lineage>
        <taxon>Eukaryota</taxon>
        <taxon>Viridiplantae</taxon>
        <taxon>Streptophyta</taxon>
        <taxon>Embryophyta</taxon>
        <taxon>Tracheophyta</taxon>
        <taxon>Spermatophyta</taxon>
        <taxon>Magnoliopsida</taxon>
        <taxon>eudicotyledons</taxon>
        <taxon>Gunneridae</taxon>
        <taxon>Pentapetalae</taxon>
        <taxon>rosids</taxon>
        <taxon>malvids</taxon>
        <taxon>Brassicales</taxon>
        <taxon>Brassicaceae</taxon>
        <taxon>Camelineae</taxon>
        <taxon>Arabidopsis</taxon>
    </lineage>
</organism>
<sequence>MEEYQHDNSTTPQRVSFLYSPISSSNKNDNTSDTNNNNNNNNSSNYGPGYNNTNNNNHHHQHMLFPHMSSLLPQTTENCFRSDHDQPNNNNNPSVKSEASSSRINHYSMLMRAIHNTQEANNNNNDNVSDVEAMKAKIIAHPHYSTLLQAYLDCQKIGAPPDVVDRITAARQDFEARQQRSTPSVSASSRDPELDQFMEAYCDMLVKYREELTRPIQEAMEFIRRIESQLSMLCQSPIHILNNPDGKSDNMGSSDEEQENNSGGETELPEIDPRAEDRELKNHLLKKYSGYLSSLKQELSKKKKKGKLPKEARQKLLTWWELHYKWPYPSESEKVALAESTGLDQKQINNWFINQRKRHWKPSEDMQFMVMDGLQHPHHAALYMDGHYMGDGPYRLGP</sequence>
<accession>P46639</accession>
<accession>Q8S3L9</accession>
<accession>Q8S3M0</accession>
<gene>
    <name type="primary">KNAT1</name>
    <name type="synonym">BP</name>
    <name type="synonym">BP1</name>
    <name type="ordered locus">At4g08150</name>
    <name type="ORF">F9M13.2</name>
</gene>
<comment type="function">
    <text evidence="5 7 15">May play a role in meristem function, and may be involved in maintaining cells in an undifferentiated, meristematic state, and its expression disappears at the same time the shoot apex undergoes the transition from vegetative to reproductive development (PubMed:11934861). Positive regulator of LATERAL ORGAN BOUNDARIES (LOB) (PubMed:11934861). Probably binds to the DNA sequence 5'-TGAC-3' (PubMed:11934861). Able to traffic from the L1 to the L2/L3 layers of the meristem, presumably through plasmodesmata (PubMed:12900451).</text>
</comment>
<comment type="subunit">
    <text evidence="4 6 8 9 10 11 12 13 14">May form heterodimeric complex with the TALE/BELL proteins BEL1, BLH2, BLH8/PNF and BLH9/PNY (PubMed:11701881, PubMed:12897247, PubMed:16741748, PubMed:17873098). Interacts with OFP1, OFP2, OFP4, OFP6 and OFP12 (PubMed:15781858). Interacts with CCT7 and CCT8 (PubMed:21868675). Interacts with KNATM-B (PubMed:18398054). Binds to AGO10/PNH (PubMed:26390296). Interacts with BZIP30 (PubMed:27402171).</text>
</comment>
<comment type="interaction">
    <interactant intactId="EBI-530486">
        <id>P46639</id>
    </interactant>
    <interactant intactId="EBI-25518310">
        <id>A0A384KCR8</id>
        <label>At1g05860</label>
    </interactant>
    <organismsDiffer>false</organismsDiffer>
    <experiments>3</experiments>
</comment>
<comment type="interaction">
    <interactant intactId="EBI-530486">
        <id>P46639</id>
    </interactant>
    <interactant intactId="EBI-25516058">
        <id>F4HZI8</id>
        <label>At1g15200</label>
    </interactant>
    <organismsDiffer>false</organismsDiffer>
    <experiments>3</experiments>
</comment>
<comment type="interaction">
    <interactant intactId="EBI-530486">
        <id>P46639</id>
    </interactant>
    <interactant intactId="EBI-4426262">
        <id>Q9SXE5</id>
        <label>At1g62520</label>
    </interactant>
    <organismsDiffer>false</organismsDiffer>
    <experiments>3</experiments>
</comment>
<comment type="interaction">
    <interactant intactId="EBI-530486">
        <id>P46639</id>
    </interactant>
    <interactant intactId="EBI-25510857">
        <id>A0A178VY90</id>
        <label>At2g32840</label>
    </interactant>
    <organismsDiffer>false</organismsDiffer>
    <experiments>3</experiments>
</comment>
<comment type="interaction">
    <interactant intactId="EBI-530486">
        <id>P46639</id>
    </interactant>
    <interactant intactId="EBI-15191983">
        <id>A0A1I9LTW1</id>
        <label>At3g54390</label>
    </interactant>
    <organismsDiffer>false</organismsDiffer>
    <experiments>3</experiments>
</comment>
<comment type="interaction">
    <interactant intactId="EBI-530486">
        <id>P46639</id>
    </interactant>
    <interactant intactId="EBI-1238139">
        <id>Q9LYL6</id>
        <label>At3g56270</label>
    </interactant>
    <organismsDiffer>false</organismsDiffer>
    <experiments>3</experiments>
</comment>
<comment type="interaction">
    <interactant intactId="EBI-530486">
        <id>P46639</id>
    </interactant>
    <interactant intactId="EBI-912904">
        <id>P48731</id>
        <label>ATH1</label>
    </interactant>
    <organismsDiffer>false</organismsDiffer>
    <experiments>6</experiments>
</comment>
<comment type="interaction">
    <interactant intactId="EBI-530486">
        <id>P46639</id>
    </interactant>
    <interactant intactId="EBI-1153783">
        <id>Q38897</id>
        <label>BEL1</label>
    </interactant>
    <organismsDiffer>false</organismsDiffer>
    <experiments>9</experiments>
</comment>
<comment type="interaction">
    <interactant intactId="EBI-530486">
        <id>P46639</id>
    </interactant>
    <interactant intactId="EBI-15192173">
        <id>Q9SK91</id>
        <label>BHLH94</label>
    </interactant>
    <organismsDiffer>false</organismsDiffer>
    <experiments>3</experiments>
</comment>
<comment type="interaction">
    <interactant intactId="EBI-530486">
        <id>P46639</id>
    </interactant>
    <interactant intactId="EBI-1153797">
        <id>Q94KL5</id>
        <label>BLH4</label>
    </interactant>
    <organismsDiffer>false</organismsDiffer>
    <experiments>3</experiments>
</comment>
<comment type="interaction">
    <interactant intactId="EBI-530486">
        <id>P46639</id>
    </interactant>
    <interactant intactId="EBI-1153881">
        <id>O65685</id>
        <label>BLH6</label>
    </interactant>
    <organismsDiffer>false</organismsDiffer>
    <experiments>4</experiments>
</comment>
<comment type="interaction">
    <interactant intactId="EBI-530486">
        <id>P46639</id>
    </interactant>
    <interactant intactId="EBI-1153967">
        <id>Q9SIW1</id>
        <label>BLH7</label>
    </interactant>
    <organismsDiffer>false</organismsDiffer>
    <experiments>5</experiments>
</comment>
<comment type="interaction">
    <interactant intactId="EBI-530486">
        <id>P46639</id>
    </interactant>
    <interactant intactId="EBI-1154034">
        <id>Q9SJJ3</id>
        <label>BLH8</label>
    </interactant>
    <organismsDiffer>false</organismsDiffer>
    <experiments>3</experiments>
</comment>
<comment type="interaction">
    <interactant intactId="EBI-530486">
        <id>P46639</id>
    </interactant>
    <interactant intactId="EBI-530473">
        <id>Q9LZM8</id>
        <label>BLH9</label>
    </interactant>
    <organismsDiffer>false</organismsDiffer>
    <experiments>9</experiments>
</comment>
<comment type="interaction">
    <interactant intactId="EBI-530486">
        <id>P46639</id>
    </interactant>
    <interactant intactId="EBI-602912">
        <id>Q8L5Y6</id>
        <label>CAND1</label>
    </interactant>
    <organismsDiffer>false</organismsDiffer>
    <experiments>4</experiments>
</comment>
<comment type="interaction">
    <interactant intactId="EBI-530486">
        <id>P46639</id>
    </interactant>
    <interactant intactId="EBI-4425470">
        <id>Q84K25</id>
        <label>COG8</label>
    </interactant>
    <organismsDiffer>false</organismsDiffer>
    <experiments>3</experiments>
</comment>
<comment type="interaction">
    <interactant intactId="EBI-530486">
        <id>P46639</id>
    </interactant>
    <interactant intactId="EBI-25522794">
        <id>Q84Y18</id>
        <label>CXIP4</label>
    </interactant>
    <organismsDiffer>false</organismsDiffer>
    <experiments>3</experiments>
</comment>
<comment type="interaction">
    <interactant intactId="EBI-530486">
        <id>P46639</id>
    </interactant>
    <interactant intactId="EBI-401198">
        <id>Q9SKK0</id>
        <label>EBF1</label>
    </interactant>
    <organismsDiffer>false</organismsDiffer>
    <experiments>3</experiments>
</comment>
<comment type="interaction">
    <interactant intactId="EBI-530486">
        <id>P46639</id>
    </interactant>
    <interactant intactId="EBI-25511744">
        <id>O80654</id>
        <label>ERF037</label>
    </interactant>
    <organismsDiffer>false</organismsDiffer>
    <experiments>4</experiments>
</comment>
<comment type="interaction">
    <interactant intactId="EBI-530486">
        <id>P46639</id>
    </interactant>
    <interactant intactId="EBI-25516131">
        <id>Q9FN91</id>
        <label>EXO70H7</label>
    </interactant>
    <organismsDiffer>false</organismsDiffer>
    <experiments>3</experiments>
</comment>
<comment type="interaction">
    <interactant intactId="EBI-530486">
        <id>P46639</id>
    </interactant>
    <interactant intactId="EBI-446380">
        <id>Q9SQI2</id>
        <label>GI</label>
    </interactant>
    <organismsDiffer>false</organismsDiffer>
    <experiments>3</experiments>
</comment>
<comment type="interaction">
    <interactant intactId="EBI-530486">
        <id>P46639</id>
    </interactant>
    <interactant intactId="EBI-2012188">
        <id>Q8RXD6</id>
        <label>HUB1</label>
    </interactant>
    <organismsDiffer>false</organismsDiffer>
    <experiments>5</experiments>
</comment>
<comment type="interaction">
    <interactant intactId="EBI-530486">
        <id>P46639</id>
    </interactant>
    <interactant intactId="EBI-530486">
        <id>P46639</id>
        <label>KNAT1</label>
    </interactant>
    <organismsDiffer>false</organismsDiffer>
    <experiments>6</experiments>
</comment>
<comment type="interaction">
    <interactant intactId="EBI-530486">
        <id>P46639</id>
    </interactant>
    <interactant intactId="EBI-2358409">
        <id>O80397</id>
        <label>MKK4</label>
    </interactant>
    <organismsDiffer>false</organismsDiffer>
    <experiments>3</experiments>
</comment>
<comment type="interaction">
    <interactant intactId="EBI-530486">
        <id>P46639</id>
    </interactant>
    <interactant intactId="EBI-4440057">
        <id>Q8GWP0</id>
        <label>MYB39</label>
    </interactant>
    <organismsDiffer>false</organismsDiffer>
    <experiments>3</experiments>
</comment>
<comment type="interaction">
    <interactant intactId="EBI-530486">
        <id>P46639</id>
    </interactant>
    <interactant intactId="EBI-25511270">
        <id>Q9FX36</id>
        <label>MYB54</label>
    </interactant>
    <organismsDiffer>false</organismsDiffer>
    <experiments>5</experiments>
</comment>
<comment type="interaction">
    <interactant intactId="EBI-530486">
        <id>P46639</id>
    </interactant>
    <interactant intactId="EBI-4444640">
        <id>Q84JP1</id>
        <label>NFYA7</label>
    </interactant>
    <organismsDiffer>false</organismsDiffer>
    <experiments>3</experiments>
</comment>
<comment type="interaction">
    <interactant intactId="EBI-530486">
        <id>P46639</id>
    </interactant>
    <interactant intactId="EBI-594133">
        <id>Q9SGW3</id>
        <label>RPN12A</label>
    </interactant>
    <organismsDiffer>false</organismsDiffer>
    <experiments>3</experiments>
</comment>
<comment type="interaction">
    <interactant intactId="EBI-530486">
        <id>P46639</id>
    </interactant>
    <interactant intactId="EBI-4456124">
        <id>Q9LUF3</id>
        <label>SAE1B-1</label>
    </interactant>
    <organismsDiffer>false</organismsDiffer>
    <experiments>4</experiments>
</comment>
<comment type="interaction">
    <interactant intactId="EBI-530486">
        <id>P46639</id>
    </interactant>
    <interactant intactId="EBI-604427">
        <id>Q9ZU90</id>
        <label>SKIP28</label>
    </interactant>
    <organismsDiffer>false</organismsDiffer>
    <experiments>3</experiments>
</comment>
<comment type="interaction">
    <interactant intactId="EBI-530486">
        <id>P46639</id>
    </interactant>
    <interactant intactId="EBI-1102271">
        <id>Q84JG2</id>
        <label>SWI3B</label>
    </interactant>
    <organismsDiffer>false</organismsDiffer>
    <experiments>6</experiments>
</comment>
<comment type="interaction">
    <interactant intactId="EBI-530486">
        <id>P46639</id>
    </interactant>
    <interactant intactId="EBI-15192327">
        <id>Q9LEZ9</id>
        <label>TCP17</label>
    </interactant>
    <organismsDiffer>false</organismsDiffer>
    <experiments>3</experiments>
</comment>
<comment type="interaction">
    <interactant intactId="EBI-530486">
        <id>P46639</id>
    </interactant>
    <interactant intactId="EBI-4426178">
        <id>Q9LT89</id>
        <label>TCP19</label>
    </interactant>
    <organismsDiffer>false</organismsDiffer>
    <experiments>3</experiments>
</comment>
<comment type="interaction">
    <interactant intactId="EBI-530486">
        <id>P46639</id>
    </interactant>
    <interactant intactId="EBI-15192297">
        <id>Q9LQF0</id>
        <label>TCP23</label>
    </interactant>
    <organismsDiffer>false</organismsDiffer>
    <experiments>3</experiments>
</comment>
<comment type="interaction">
    <interactant intactId="EBI-530486">
        <id>P46639</id>
    </interactant>
    <interactant intactId="EBI-4426557">
        <id>Q84MB2</id>
        <label>TIFY8</label>
    </interactant>
    <organismsDiffer>false</organismsDiffer>
    <experiments>5</experiments>
</comment>
<comment type="interaction">
    <interactant intactId="EBI-530486">
        <id>P46639</id>
    </interactant>
    <interactant intactId="EBI-4424568">
        <id>Q9LVG2</id>
        <label>TOE2</label>
    </interactant>
    <organismsDiffer>false</organismsDiffer>
    <experiments>3</experiments>
</comment>
<comment type="interaction">
    <interactant intactId="EBI-530486">
        <id>P46639</id>
    </interactant>
    <interactant intactId="EBI-3133156">
        <id>O22768</id>
        <label>UNE12</label>
    </interactant>
    <organismsDiffer>false</organismsDiffer>
    <experiments>3</experiments>
</comment>
<comment type="interaction">
    <interactant intactId="EBI-530486">
        <id>P46639</id>
    </interactant>
    <interactant intactId="EBI-15193683">
        <id>Q5CCK4</id>
        <label>VAL2</label>
    </interactant>
    <organismsDiffer>false</organismsDiffer>
    <experiments>3</experiments>
</comment>
<comment type="interaction">
    <interactant intactId="EBI-530486">
        <id>P46639</id>
    </interactant>
    <interactant intactId="EBI-15214372">
        <id>Q93WU9</id>
        <label>WRKY51</label>
    </interactant>
    <organismsDiffer>false</organismsDiffer>
    <experiments>3</experiments>
</comment>
<comment type="subcellular location">
    <subcellularLocation>
        <location evidence="16">Nucleus</location>
    </subcellularLocation>
</comment>
<comment type="tissue specificity">
    <text evidence="7 13 15">Expressed in the vegetative meristem. Present in the base of flower primordia (PubMed:26390296).</text>
</comment>
<comment type="induction">
    <text>Negatively regulated by ASYMMETRIC LEAVES1 (AS1) and ASYMMETRIC LEAVES2 (AS2).</text>
</comment>
<comment type="similarity">
    <text evidence="2">Belongs to the TALE/KNOX homeobox family.</text>
</comment>
<feature type="chain" id="PRO_0000048957" description="Homeobox protein knotted-1-like 1">
    <location>
        <begin position="1"/>
        <end position="398"/>
    </location>
</feature>
<feature type="domain" description="ELK" evidence="2">
    <location>
        <begin position="279"/>
        <end position="299"/>
    </location>
</feature>
<feature type="DNA-binding region" description="Homeobox; TALE-type" evidence="1">
    <location>
        <begin position="300"/>
        <end position="363"/>
    </location>
</feature>
<feature type="region of interest" description="Disordered" evidence="3">
    <location>
        <begin position="20"/>
        <end position="61"/>
    </location>
</feature>
<feature type="region of interest" description="Disordered" evidence="3">
    <location>
        <begin position="78"/>
        <end position="102"/>
    </location>
</feature>
<feature type="region of interest" description="Disordered" evidence="3">
    <location>
        <begin position="241"/>
        <end position="273"/>
    </location>
</feature>
<feature type="compositionally biased region" description="Low complexity" evidence="3">
    <location>
        <begin position="23"/>
        <end position="56"/>
    </location>
</feature>
<feature type="compositionally biased region" description="Polar residues" evidence="3">
    <location>
        <begin position="87"/>
        <end position="102"/>
    </location>
</feature>
<feature type="sequence conflict" description="In Ref. 2; AAM03027/AAM03026." evidence="16" ref="2">
    <original>T</original>
    <variation>S</variation>
    <location>
        <position position="10"/>
    </location>
</feature>
<feature type="sequence conflict" description="In Ref. 2; AAM03026." evidence="16" ref="2">
    <original>E</original>
    <variation>D</variation>
    <location>
        <position position="77"/>
    </location>
</feature>
<feature type="sequence conflict" description="In Ref. 2; AAM03027/AAM03026." evidence="16" ref="2">
    <original>N</original>
    <variation>NN</variation>
    <location>
        <position position="92"/>
    </location>
</feature>
<feature type="sequence conflict" description="In Ref. 2; AAM03027/AAM03026." evidence="16" ref="2">
    <original>N</original>
    <variation>NN</variation>
    <location>
        <position position="125"/>
    </location>
</feature>
<dbReference type="EMBL" id="U14174">
    <property type="protein sequence ID" value="AAA67881.1"/>
    <property type="molecule type" value="Genomic_DNA"/>
</dbReference>
<dbReference type="EMBL" id="AF482994">
    <property type="protein sequence ID" value="AAM03026.1"/>
    <property type="molecule type" value="mRNA"/>
</dbReference>
<dbReference type="EMBL" id="AF482995">
    <property type="protein sequence ID" value="AAM03027.1"/>
    <property type="molecule type" value="mRNA"/>
</dbReference>
<dbReference type="EMBL" id="AC006267">
    <property type="protein sequence ID" value="AAD27897.1"/>
    <property type="molecule type" value="Genomic_DNA"/>
</dbReference>
<dbReference type="EMBL" id="AL161510">
    <property type="protein sequence ID" value="CAB81151.1"/>
    <property type="molecule type" value="Genomic_DNA"/>
</dbReference>
<dbReference type="EMBL" id="CP002687">
    <property type="protein sequence ID" value="AEE82597.1"/>
    <property type="molecule type" value="Genomic_DNA"/>
</dbReference>
<dbReference type="EMBL" id="AY080834">
    <property type="protein sequence ID" value="AAL87309.1"/>
    <property type="molecule type" value="mRNA"/>
</dbReference>
<dbReference type="EMBL" id="AY113982">
    <property type="protein sequence ID" value="AAM45030.1"/>
    <property type="molecule type" value="mRNA"/>
</dbReference>
<dbReference type="PIR" id="D85080">
    <property type="entry name" value="D85080"/>
</dbReference>
<dbReference type="RefSeq" id="NP_192555.1">
    <property type="nucleotide sequence ID" value="NM_116884.4"/>
</dbReference>
<dbReference type="SMR" id="P46639"/>
<dbReference type="BioGRID" id="11664">
    <property type="interactions" value="110"/>
</dbReference>
<dbReference type="FunCoup" id="P46639">
    <property type="interactions" value="242"/>
</dbReference>
<dbReference type="IntAct" id="P46639">
    <property type="interactions" value="130"/>
</dbReference>
<dbReference type="STRING" id="3702.P46639"/>
<dbReference type="PaxDb" id="3702-AT4G08150.1"/>
<dbReference type="ProteomicsDB" id="237044"/>
<dbReference type="EnsemblPlants" id="AT4G08150.1">
    <property type="protein sequence ID" value="AT4G08150.1"/>
    <property type="gene ID" value="AT4G08150"/>
</dbReference>
<dbReference type="GeneID" id="826364"/>
<dbReference type="Gramene" id="AT4G08150.1">
    <property type="protein sequence ID" value="AT4G08150.1"/>
    <property type="gene ID" value="AT4G08150"/>
</dbReference>
<dbReference type="KEGG" id="ath:AT4G08150"/>
<dbReference type="Araport" id="AT4G08150"/>
<dbReference type="TAIR" id="AT4G08150">
    <property type="gene designation" value="KNAT1"/>
</dbReference>
<dbReference type="eggNOG" id="KOG0773">
    <property type="taxonomic scope" value="Eukaryota"/>
</dbReference>
<dbReference type="HOGENOM" id="CLU_040111_0_0_1"/>
<dbReference type="InParanoid" id="P46639"/>
<dbReference type="OMA" id="HNTQEAN"/>
<dbReference type="PhylomeDB" id="P46639"/>
<dbReference type="PRO" id="PR:P46639"/>
<dbReference type="Proteomes" id="UP000006548">
    <property type="component" value="Chromosome 4"/>
</dbReference>
<dbReference type="ExpressionAtlas" id="P46639">
    <property type="expression patterns" value="baseline and differential"/>
</dbReference>
<dbReference type="GO" id="GO:0005634">
    <property type="term" value="C:nucleus"/>
    <property type="evidence" value="ECO:0000250"/>
    <property type="project" value="TAIR"/>
</dbReference>
<dbReference type="GO" id="GO:0003700">
    <property type="term" value="F:DNA-binding transcription factor activity"/>
    <property type="evidence" value="ECO:0000250"/>
    <property type="project" value="TAIR"/>
</dbReference>
<dbReference type="GO" id="GO:0000981">
    <property type="term" value="F:DNA-binding transcription factor activity, RNA polymerase II-specific"/>
    <property type="evidence" value="ECO:0007669"/>
    <property type="project" value="InterPro"/>
</dbReference>
<dbReference type="GO" id="GO:0042802">
    <property type="term" value="F:identical protein binding"/>
    <property type="evidence" value="ECO:0000353"/>
    <property type="project" value="IntAct"/>
</dbReference>
<dbReference type="GO" id="GO:0000976">
    <property type="term" value="F:transcription cis-regulatory region binding"/>
    <property type="evidence" value="ECO:0000353"/>
    <property type="project" value="TAIR"/>
</dbReference>
<dbReference type="GO" id="GO:0045165">
    <property type="term" value="P:cell fate commitment"/>
    <property type="evidence" value="ECO:0000315"/>
    <property type="project" value="TAIR"/>
</dbReference>
<dbReference type="GO" id="GO:0001708">
    <property type="term" value="P:cell fate specification"/>
    <property type="evidence" value="ECO:0000315"/>
    <property type="project" value="TAIR"/>
</dbReference>
<dbReference type="GO" id="GO:0010051">
    <property type="term" value="P:xylem and phloem pattern formation"/>
    <property type="evidence" value="ECO:0000315"/>
    <property type="project" value="TAIR"/>
</dbReference>
<dbReference type="GO" id="GO:0010089">
    <property type="term" value="P:xylem development"/>
    <property type="evidence" value="ECO:0000315"/>
    <property type="project" value="TAIR"/>
</dbReference>
<dbReference type="CDD" id="cd00086">
    <property type="entry name" value="homeodomain"/>
    <property type="match status" value="1"/>
</dbReference>
<dbReference type="FunFam" id="1.10.10.60:FF:000076">
    <property type="entry name" value="Homeobox protein knotted-1-like 2"/>
    <property type="match status" value="1"/>
</dbReference>
<dbReference type="Gene3D" id="1.10.10.60">
    <property type="entry name" value="Homeodomain-like"/>
    <property type="match status" value="1"/>
</dbReference>
<dbReference type="InterPro" id="IPR005539">
    <property type="entry name" value="ELK_dom"/>
</dbReference>
<dbReference type="InterPro" id="IPR001356">
    <property type="entry name" value="HD"/>
</dbReference>
<dbReference type="InterPro" id="IPR017970">
    <property type="entry name" value="Homeobox_CS"/>
</dbReference>
<dbReference type="InterPro" id="IPR009057">
    <property type="entry name" value="Homeodomain-like_sf"/>
</dbReference>
<dbReference type="InterPro" id="IPR008422">
    <property type="entry name" value="KN_HD"/>
</dbReference>
<dbReference type="InterPro" id="IPR005540">
    <property type="entry name" value="KNOX1"/>
</dbReference>
<dbReference type="InterPro" id="IPR005541">
    <property type="entry name" value="KNOX2"/>
</dbReference>
<dbReference type="InterPro" id="IPR050224">
    <property type="entry name" value="TALE_homeobox"/>
</dbReference>
<dbReference type="PANTHER" id="PTHR11850">
    <property type="entry name" value="HOMEOBOX PROTEIN TRANSCRIPTION FACTORS"/>
    <property type="match status" value="1"/>
</dbReference>
<dbReference type="Pfam" id="PF03789">
    <property type="entry name" value="ELK"/>
    <property type="match status" value="1"/>
</dbReference>
<dbReference type="Pfam" id="PF05920">
    <property type="entry name" value="Homeobox_KN"/>
    <property type="match status" value="1"/>
</dbReference>
<dbReference type="Pfam" id="PF03790">
    <property type="entry name" value="KNOX1"/>
    <property type="match status" value="1"/>
</dbReference>
<dbReference type="Pfam" id="PF03791">
    <property type="entry name" value="KNOX2"/>
    <property type="match status" value="1"/>
</dbReference>
<dbReference type="SMART" id="SM01188">
    <property type="entry name" value="ELK"/>
    <property type="match status" value="1"/>
</dbReference>
<dbReference type="SMART" id="SM00389">
    <property type="entry name" value="HOX"/>
    <property type="match status" value="1"/>
</dbReference>
<dbReference type="SMART" id="SM01255">
    <property type="entry name" value="KNOX1"/>
    <property type="match status" value="1"/>
</dbReference>
<dbReference type="SMART" id="SM01256">
    <property type="entry name" value="KNOX2"/>
    <property type="match status" value="1"/>
</dbReference>
<dbReference type="SUPFAM" id="SSF46689">
    <property type="entry name" value="Homeodomain-like"/>
    <property type="match status" value="1"/>
</dbReference>
<dbReference type="PROSITE" id="PS51213">
    <property type="entry name" value="ELK"/>
    <property type="match status" value="1"/>
</dbReference>
<dbReference type="PROSITE" id="PS00027">
    <property type="entry name" value="HOMEOBOX_1"/>
    <property type="match status" value="1"/>
</dbReference>
<dbReference type="PROSITE" id="PS50071">
    <property type="entry name" value="HOMEOBOX_2"/>
    <property type="match status" value="1"/>
</dbReference>
<name>KNAT1_ARATH</name>